<reference key="1">
    <citation type="journal article" date="2007" name="Proc. Natl. Acad. Sci. U.S.A.">
        <title>Genome and proteome of long-chain alkane degrading Geobacillus thermodenitrificans NG80-2 isolated from a deep-subsurface oil reservoir.</title>
        <authorList>
            <person name="Feng L."/>
            <person name="Wang W."/>
            <person name="Cheng J."/>
            <person name="Ren Y."/>
            <person name="Zhao G."/>
            <person name="Gao C."/>
            <person name="Tang Y."/>
            <person name="Liu X."/>
            <person name="Han W."/>
            <person name="Peng X."/>
            <person name="Liu R."/>
            <person name="Wang L."/>
        </authorList>
    </citation>
    <scope>NUCLEOTIDE SEQUENCE [LARGE SCALE GENOMIC DNA]</scope>
    <source>
        <strain>NG80-2</strain>
    </source>
</reference>
<organism>
    <name type="scientific">Geobacillus thermodenitrificans (strain NG80-2)</name>
    <dbReference type="NCBI Taxonomy" id="420246"/>
    <lineage>
        <taxon>Bacteria</taxon>
        <taxon>Bacillati</taxon>
        <taxon>Bacillota</taxon>
        <taxon>Bacilli</taxon>
        <taxon>Bacillales</taxon>
        <taxon>Anoxybacillaceae</taxon>
        <taxon>Geobacillus</taxon>
    </lineage>
</organism>
<name>RSGA_GEOTN</name>
<proteinExistence type="inferred from homology"/>
<evidence type="ECO:0000255" key="1">
    <source>
        <dbReference type="HAMAP-Rule" id="MF_01820"/>
    </source>
</evidence>
<evidence type="ECO:0000255" key="2">
    <source>
        <dbReference type="PROSITE-ProRule" id="PRU01058"/>
    </source>
</evidence>
<sequence>MAEGQIIKALSGFYYVLSEGKVFQCRGRGVFRKQKVTPLVGDRVVFTATGEAEGYILEICERQNELVRPPVANVEQAILVFSAVSPDFSAKLLDRFLVLVESKNITPVIVISKIDLLDGGMKETIAQYVRDYRHIGYEVIETSTVTKEGLDELMSHLCGRVSVVAGQSGVGKSSLLNALRPDLQLKTGDISTHLGRGKHTTRHVELLAIAGGLVADTPGFSALEFDHIELDELPYYFPEFRAYGEGCKFRGCLHVAEPKCAVREAAEAGDIAPYRYDHYLSFVAEMKERKPRY</sequence>
<gene>
    <name evidence="1" type="primary">rsgA</name>
    <name type="ordered locus">GTNG_1030</name>
</gene>
<accession>A4IM52</accession>
<feature type="chain" id="PRO_1000188080" description="Small ribosomal subunit biogenesis GTPase RsgA">
    <location>
        <begin position="1"/>
        <end position="293"/>
    </location>
</feature>
<feature type="domain" description="CP-type G" evidence="2">
    <location>
        <begin position="63"/>
        <end position="223"/>
    </location>
</feature>
<feature type="binding site" evidence="1">
    <location>
        <begin position="112"/>
        <end position="115"/>
    </location>
    <ligand>
        <name>GTP</name>
        <dbReference type="ChEBI" id="CHEBI:37565"/>
    </ligand>
</feature>
<feature type="binding site" evidence="1">
    <location>
        <begin position="166"/>
        <end position="174"/>
    </location>
    <ligand>
        <name>GTP</name>
        <dbReference type="ChEBI" id="CHEBI:37565"/>
    </ligand>
</feature>
<feature type="binding site" evidence="1">
    <location>
        <position position="247"/>
    </location>
    <ligand>
        <name>Zn(2+)</name>
        <dbReference type="ChEBI" id="CHEBI:29105"/>
    </ligand>
</feature>
<feature type="binding site" evidence="1">
    <location>
        <position position="252"/>
    </location>
    <ligand>
        <name>Zn(2+)</name>
        <dbReference type="ChEBI" id="CHEBI:29105"/>
    </ligand>
</feature>
<feature type="binding site" evidence="1">
    <location>
        <position position="254"/>
    </location>
    <ligand>
        <name>Zn(2+)</name>
        <dbReference type="ChEBI" id="CHEBI:29105"/>
    </ligand>
</feature>
<feature type="binding site" evidence="1">
    <location>
        <position position="260"/>
    </location>
    <ligand>
        <name>Zn(2+)</name>
        <dbReference type="ChEBI" id="CHEBI:29105"/>
    </ligand>
</feature>
<dbReference type="EC" id="3.6.1.-" evidence="1"/>
<dbReference type="EMBL" id="CP000557">
    <property type="protein sequence ID" value="ABO66406.1"/>
    <property type="molecule type" value="Genomic_DNA"/>
</dbReference>
<dbReference type="RefSeq" id="WP_008878633.1">
    <property type="nucleotide sequence ID" value="NC_009328.1"/>
</dbReference>
<dbReference type="SMR" id="A4IM52"/>
<dbReference type="KEGG" id="gtn:GTNG_1030"/>
<dbReference type="eggNOG" id="COG1162">
    <property type="taxonomic scope" value="Bacteria"/>
</dbReference>
<dbReference type="HOGENOM" id="CLU_033617_2_1_9"/>
<dbReference type="Proteomes" id="UP000001578">
    <property type="component" value="Chromosome"/>
</dbReference>
<dbReference type="GO" id="GO:0005737">
    <property type="term" value="C:cytoplasm"/>
    <property type="evidence" value="ECO:0007669"/>
    <property type="project" value="UniProtKB-SubCell"/>
</dbReference>
<dbReference type="GO" id="GO:0005525">
    <property type="term" value="F:GTP binding"/>
    <property type="evidence" value="ECO:0007669"/>
    <property type="project" value="UniProtKB-UniRule"/>
</dbReference>
<dbReference type="GO" id="GO:0003924">
    <property type="term" value="F:GTPase activity"/>
    <property type="evidence" value="ECO:0007669"/>
    <property type="project" value="UniProtKB-UniRule"/>
</dbReference>
<dbReference type="GO" id="GO:0046872">
    <property type="term" value="F:metal ion binding"/>
    <property type="evidence" value="ECO:0007669"/>
    <property type="project" value="UniProtKB-KW"/>
</dbReference>
<dbReference type="GO" id="GO:0019843">
    <property type="term" value="F:rRNA binding"/>
    <property type="evidence" value="ECO:0007669"/>
    <property type="project" value="UniProtKB-KW"/>
</dbReference>
<dbReference type="GO" id="GO:0042274">
    <property type="term" value="P:ribosomal small subunit biogenesis"/>
    <property type="evidence" value="ECO:0007669"/>
    <property type="project" value="UniProtKB-UniRule"/>
</dbReference>
<dbReference type="CDD" id="cd04466">
    <property type="entry name" value="S1_YloQ_GTPase"/>
    <property type="match status" value="1"/>
</dbReference>
<dbReference type="CDD" id="cd01854">
    <property type="entry name" value="YjeQ_EngC"/>
    <property type="match status" value="1"/>
</dbReference>
<dbReference type="Gene3D" id="2.40.50.140">
    <property type="entry name" value="Nucleic acid-binding proteins"/>
    <property type="match status" value="1"/>
</dbReference>
<dbReference type="Gene3D" id="3.40.50.300">
    <property type="entry name" value="P-loop containing nucleotide triphosphate hydrolases"/>
    <property type="match status" value="1"/>
</dbReference>
<dbReference type="Gene3D" id="1.10.40.50">
    <property type="entry name" value="Probable gtpase engc, domain 3"/>
    <property type="match status" value="1"/>
</dbReference>
<dbReference type="HAMAP" id="MF_01820">
    <property type="entry name" value="GTPase_RsgA"/>
    <property type="match status" value="1"/>
</dbReference>
<dbReference type="InterPro" id="IPR030378">
    <property type="entry name" value="G_CP_dom"/>
</dbReference>
<dbReference type="InterPro" id="IPR012340">
    <property type="entry name" value="NA-bd_OB-fold"/>
</dbReference>
<dbReference type="InterPro" id="IPR027417">
    <property type="entry name" value="P-loop_NTPase"/>
</dbReference>
<dbReference type="InterPro" id="IPR004881">
    <property type="entry name" value="Ribosome_biogen_GTPase_RsgA"/>
</dbReference>
<dbReference type="InterPro" id="IPR010914">
    <property type="entry name" value="RsgA_GTPase_dom"/>
</dbReference>
<dbReference type="InterPro" id="IPR031944">
    <property type="entry name" value="RsgA_N"/>
</dbReference>
<dbReference type="NCBIfam" id="TIGR00157">
    <property type="entry name" value="ribosome small subunit-dependent GTPase A"/>
    <property type="match status" value="1"/>
</dbReference>
<dbReference type="PANTHER" id="PTHR32120">
    <property type="entry name" value="SMALL RIBOSOMAL SUBUNIT BIOGENESIS GTPASE RSGA"/>
    <property type="match status" value="1"/>
</dbReference>
<dbReference type="PANTHER" id="PTHR32120:SF11">
    <property type="entry name" value="SMALL RIBOSOMAL SUBUNIT BIOGENESIS GTPASE RSGA 1, MITOCHONDRIAL-RELATED"/>
    <property type="match status" value="1"/>
</dbReference>
<dbReference type="Pfam" id="PF03193">
    <property type="entry name" value="RsgA_GTPase"/>
    <property type="match status" value="1"/>
</dbReference>
<dbReference type="Pfam" id="PF16745">
    <property type="entry name" value="RsgA_N"/>
    <property type="match status" value="1"/>
</dbReference>
<dbReference type="SUPFAM" id="SSF50249">
    <property type="entry name" value="Nucleic acid-binding proteins"/>
    <property type="match status" value="1"/>
</dbReference>
<dbReference type="SUPFAM" id="SSF52540">
    <property type="entry name" value="P-loop containing nucleoside triphosphate hydrolases"/>
    <property type="match status" value="1"/>
</dbReference>
<dbReference type="PROSITE" id="PS50936">
    <property type="entry name" value="ENGC_GTPASE"/>
    <property type="match status" value="1"/>
</dbReference>
<dbReference type="PROSITE" id="PS51721">
    <property type="entry name" value="G_CP"/>
    <property type="match status" value="1"/>
</dbReference>
<comment type="function">
    <text evidence="1">One of several proteins that assist in the late maturation steps of the functional core of the 30S ribosomal subunit. Helps release RbfA from mature subunits. May play a role in the assembly of ribosomal proteins into the subunit. Circularly permuted GTPase that catalyzes slow GTP hydrolysis, GTPase activity is stimulated by the 30S ribosomal subunit.</text>
</comment>
<comment type="cofactor">
    <cofactor evidence="1">
        <name>Zn(2+)</name>
        <dbReference type="ChEBI" id="CHEBI:29105"/>
    </cofactor>
    <text evidence="1">Binds 1 zinc ion per subunit.</text>
</comment>
<comment type="subunit">
    <text evidence="1">Monomer. Associates with 30S ribosomal subunit, binds 16S rRNA.</text>
</comment>
<comment type="subcellular location">
    <subcellularLocation>
        <location evidence="1">Cytoplasm</location>
    </subcellularLocation>
</comment>
<comment type="similarity">
    <text evidence="1">Belongs to the TRAFAC class YlqF/YawG GTPase family. RsgA subfamily.</text>
</comment>
<keyword id="KW-0963">Cytoplasm</keyword>
<keyword id="KW-0342">GTP-binding</keyword>
<keyword id="KW-0378">Hydrolase</keyword>
<keyword id="KW-0479">Metal-binding</keyword>
<keyword id="KW-0547">Nucleotide-binding</keyword>
<keyword id="KW-0690">Ribosome biogenesis</keyword>
<keyword id="KW-0694">RNA-binding</keyword>
<keyword id="KW-0699">rRNA-binding</keyword>
<keyword id="KW-0862">Zinc</keyword>
<protein>
    <recommendedName>
        <fullName evidence="1">Small ribosomal subunit biogenesis GTPase RsgA</fullName>
        <ecNumber evidence="1">3.6.1.-</ecNumber>
    </recommendedName>
</protein>